<gene>
    <name evidence="1" type="primary">dnaK</name>
    <name type="ordered locus">VC0395_A0382</name>
    <name type="ordered locus">VC395_0871</name>
</gene>
<dbReference type="EMBL" id="CP000627">
    <property type="protein sequence ID" value="ABQ21320.1"/>
    <property type="molecule type" value="Genomic_DNA"/>
</dbReference>
<dbReference type="EMBL" id="CP001235">
    <property type="protein sequence ID" value="ACP08885.1"/>
    <property type="molecule type" value="Genomic_DNA"/>
</dbReference>
<dbReference type="RefSeq" id="WP_000516147.1">
    <property type="nucleotide sequence ID" value="NZ_JAACZH010000023.1"/>
</dbReference>
<dbReference type="SMR" id="A5F361"/>
<dbReference type="KEGG" id="vco:VC0395_A0382"/>
<dbReference type="KEGG" id="vcr:VC395_0871"/>
<dbReference type="PATRIC" id="fig|345073.21.peg.844"/>
<dbReference type="eggNOG" id="COG0443">
    <property type="taxonomic scope" value="Bacteria"/>
</dbReference>
<dbReference type="HOGENOM" id="CLU_005965_2_1_6"/>
<dbReference type="OrthoDB" id="9766019at2"/>
<dbReference type="Proteomes" id="UP000000249">
    <property type="component" value="Chromosome 2"/>
</dbReference>
<dbReference type="GO" id="GO:0005524">
    <property type="term" value="F:ATP binding"/>
    <property type="evidence" value="ECO:0007669"/>
    <property type="project" value="UniProtKB-UniRule"/>
</dbReference>
<dbReference type="GO" id="GO:0140662">
    <property type="term" value="F:ATP-dependent protein folding chaperone"/>
    <property type="evidence" value="ECO:0007669"/>
    <property type="project" value="InterPro"/>
</dbReference>
<dbReference type="GO" id="GO:0051082">
    <property type="term" value="F:unfolded protein binding"/>
    <property type="evidence" value="ECO:0007669"/>
    <property type="project" value="InterPro"/>
</dbReference>
<dbReference type="CDD" id="cd10234">
    <property type="entry name" value="ASKHA_NBD_HSP70_DnaK-like"/>
    <property type="match status" value="1"/>
</dbReference>
<dbReference type="FunFam" id="2.60.34.10:FF:000014">
    <property type="entry name" value="Chaperone protein DnaK HSP70"/>
    <property type="match status" value="1"/>
</dbReference>
<dbReference type="FunFam" id="3.30.30.30:FF:000003">
    <property type="entry name" value="Heat shock protein 9"/>
    <property type="match status" value="1"/>
</dbReference>
<dbReference type="FunFam" id="1.20.1270.10:FF:000001">
    <property type="entry name" value="Molecular chaperone DnaK"/>
    <property type="match status" value="1"/>
</dbReference>
<dbReference type="FunFam" id="3.30.420.40:FF:000004">
    <property type="entry name" value="Molecular chaperone DnaK"/>
    <property type="match status" value="1"/>
</dbReference>
<dbReference type="FunFam" id="3.90.640.10:FF:000003">
    <property type="entry name" value="Molecular chaperone DnaK"/>
    <property type="match status" value="1"/>
</dbReference>
<dbReference type="Gene3D" id="1.20.1270.10">
    <property type="match status" value="1"/>
</dbReference>
<dbReference type="Gene3D" id="3.30.420.40">
    <property type="match status" value="2"/>
</dbReference>
<dbReference type="Gene3D" id="3.90.640.10">
    <property type="entry name" value="Actin, Chain A, domain 4"/>
    <property type="match status" value="1"/>
</dbReference>
<dbReference type="Gene3D" id="2.60.34.10">
    <property type="entry name" value="Substrate Binding Domain Of DNAk, Chain A, domain 1"/>
    <property type="match status" value="1"/>
</dbReference>
<dbReference type="HAMAP" id="MF_00332">
    <property type="entry name" value="DnaK"/>
    <property type="match status" value="1"/>
</dbReference>
<dbReference type="InterPro" id="IPR043129">
    <property type="entry name" value="ATPase_NBD"/>
</dbReference>
<dbReference type="InterPro" id="IPR012725">
    <property type="entry name" value="Chaperone_DnaK"/>
</dbReference>
<dbReference type="InterPro" id="IPR018181">
    <property type="entry name" value="Heat_shock_70_CS"/>
</dbReference>
<dbReference type="InterPro" id="IPR029048">
    <property type="entry name" value="HSP70_C_sf"/>
</dbReference>
<dbReference type="InterPro" id="IPR029047">
    <property type="entry name" value="HSP70_peptide-bd_sf"/>
</dbReference>
<dbReference type="InterPro" id="IPR013126">
    <property type="entry name" value="Hsp_70_fam"/>
</dbReference>
<dbReference type="NCBIfam" id="NF001413">
    <property type="entry name" value="PRK00290.1"/>
    <property type="match status" value="1"/>
</dbReference>
<dbReference type="NCBIfam" id="NF003520">
    <property type="entry name" value="PRK05183.1"/>
    <property type="match status" value="1"/>
</dbReference>
<dbReference type="NCBIfam" id="TIGR02350">
    <property type="entry name" value="prok_dnaK"/>
    <property type="match status" value="1"/>
</dbReference>
<dbReference type="PANTHER" id="PTHR19375">
    <property type="entry name" value="HEAT SHOCK PROTEIN 70KDA"/>
    <property type="match status" value="1"/>
</dbReference>
<dbReference type="Pfam" id="PF00012">
    <property type="entry name" value="HSP70"/>
    <property type="match status" value="1"/>
</dbReference>
<dbReference type="PRINTS" id="PR00301">
    <property type="entry name" value="HEATSHOCK70"/>
</dbReference>
<dbReference type="SUPFAM" id="SSF53067">
    <property type="entry name" value="Actin-like ATPase domain"/>
    <property type="match status" value="2"/>
</dbReference>
<dbReference type="SUPFAM" id="SSF100934">
    <property type="entry name" value="Heat shock protein 70kD (HSP70), C-terminal subdomain"/>
    <property type="match status" value="1"/>
</dbReference>
<dbReference type="SUPFAM" id="SSF100920">
    <property type="entry name" value="Heat shock protein 70kD (HSP70), peptide-binding domain"/>
    <property type="match status" value="1"/>
</dbReference>
<dbReference type="PROSITE" id="PS00297">
    <property type="entry name" value="HSP70_1"/>
    <property type="match status" value="1"/>
</dbReference>
<dbReference type="PROSITE" id="PS00329">
    <property type="entry name" value="HSP70_2"/>
    <property type="match status" value="1"/>
</dbReference>
<dbReference type="PROSITE" id="PS01036">
    <property type="entry name" value="HSP70_3"/>
    <property type="match status" value="1"/>
</dbReference>
<feature type="chain" id="PRO_1000072043" description="Chaperone protein DnaK">
    <location>
        <begin position="1"/>
        <end position="635"/>
    </location>
</feature>
<feature type="region of interest" description="Disordered" evidence="2">
    <location>
        <begin position="601"/>
        <end position="635"/>
    </location>
</feature>
<feature type="compositionally biased region" description="Low complexity" evidence="2">
    <location>
        <begin position="601"/>
        <end position="616"/>
    </location>
</feature>
<feature type="compositionally biased region" description="Acidic residues" evidence="2">
    <location>
        <begin position="621"/>
        <end position="635"/>
    </location>
</feature>
<feature type="modified residue" description="Phosphothreonine; by autocatalysis" evidence="1">
    <location>
        <position position="198"/>
    </location>
</feature>
<sequence>MGKIIGIDLGTTNSCVAVLDGDKPRVIENAEGERTTPSVIAYTDGETLVGQPAKRQAVTNPQNTLFAIKRLIGRRFEDEEVQRDIKIMPYKIVKADNGDAWVEAKGQKMAAPQVSAEVLKKMKKTAEDFLGEPVTAAVITVPAYFNDAQRQATKDAGRIAGLEVKRIINEPTAAALAYGLDKQGGDRTIAVYDLGGGTFDISIIEIDEVEGEKTFEVLSTNGDTHLGGEDFDNRMINYLVDEFKKDQGIDLRNDPLAMQRLKEAAEKAKIELSSAQQTDVNLPYITADATGPKHMNIKVTRAKLEALVEDLVQRSLEPLKVALADADLSVNDITDVILVGGQTRMPMVQKKVAEFFGKEPRKDVNPDEAVAVGAAVQGGVLAGEVKDVLLLDVTPLSLGIETMGGVMTKLIEKNTTIPTKANQVFSTAEDNQSAVTIHVLQGERKQAMYNKSLGQFNLEGINPAPRGMPQIEVIFDLDADGILHVSAKDKQTGKEQKITIQASGGLSDAEIEKMVQEAEANKEADKKFEELATARNQADQMIHATRKQITEAGEALPADEKAKIETAINELETAKKGEDKAEIDAKVQALMAAAQKLMEIAQQQAQAQGANAGQSSAKEDDVVDAEFEEVNDDKK</sequence>
<proteinExistence type="inferred from homology"/>
<evidence type="ECO:0000255" key="1">
    <source>
        <dbReference type="HAMAP-Rule" id="MF_00332"/>
    </source>
</evidence>
<evidence type="ECO:0000256" key="2">
    <source>
        <dbReference type="SAM" id="MobiDB-lite"/>
    </source>
</evidence>
<accession>A5F361</accession>
<accession>C3LYL9</accession>
<reference key="1">
    <citation type="submission" date="2007-03" db="EMBL/GenBank/DDBJ databases">
        <authorList>
            <person name="Heidelberg J."/>
        </authorList>
    </citation>
    <scope>NUCLEOTIDE SEQUENCE [LARGE SCALE GENOMIC DNA]</scope>
    <source>
        <strain>ATCC 39541 / Classical Ogawa 395 / O395</strain>
    </source>
</reference>
<reference key="2">
    <citation type="journal article" date="2008" name="PLoS ONE">
        <title>A recalibrated molecular clock and independent origins for the cholera pandemic clones.</title>
        <authorList>
            <person name="Feng L."/>
            <person name="Reeves P.R."/>
            <person name="Lan R."/>
            <person name="Ren Y."/>
            <person name="Gao C."/>
            <person name="Zhou Z."/>
            <person name="Ren Y."/>
            <person name="Cheng J."/>
            <person name="Wang W."/>
            <person name="Wang J."/>
            <person name="Qian W."/>
            <person name="Li D."/>
            <person name="Wang L."/>
        </authorList>
    </citation>
    <scope>NUCLEOTIDE SEQUENCE [LARGE SCALE GENOMIC DNA]</scope>
    <source>
        <strain>ATCC 39541 / Classical Ogawa 395 / O395</strain>
    </source>
</reference>
<comment type="function">
    <text evidence="1">Acts as a chaperone.</text>
</comment>
<comment type="induction">
    <text evidence="1">By stress conditions e.g. heat shock.</text>
</comment>
<comment type="similarity">
    <text evidence="1">Belongs to the heat shock protein 70 family.</text>
</comment>
<protein>
    <recommendedName>
        <fullName evidence="1">Chaperone protein DnaK</fullName>
    </recommendedName>
    <alternativeName>
        <fullName evidence="1">HSP70</fullName>
    </alternativeName>
    <alternativeName>
        <fullName evidence="1">Heat shock 70 kDa protein</fullName>
    </alternativeName>
    <alternativeName>
        <fullName evidence="1">Heat shock protein 70</fullName>
    </alternativeName>
</protein>
<name>DNAK_VIBC3</name>
<organism>
    <name type="scientific">Vibrio cholerae serotype O1 (strain ATCC 39541 / Classical Ogawa 395 / O395)</name>
    <dbReference type="NCBI Taxonomy" id="345073"/>
    <lineage>
        <taxon>Bacteria</taxon>
        <taxon>Pseudomonadati</taxon>
        <taxon>Pseudomonadota</taxon>
        <taxon>Gammaproteobacteria</taxon>
        <taxon>Vibrionales</taxon>
        <taxon>Vibrionaceae</taxon>
        <taxon>Vibrio</taxon>
    </lineage>
</organism>
<keyword id="KW-0067">ATP-binding</keyword>
<keyword id="KW-0143">Chaperone</keyword>
<keyword id="KW-0547">Nucleotide-binding</keyword>
<keyword id="KW-0597">Phosphoprotein</keyword>
<keyword id="KW-0346">Stress response</keyword>